<accession>Q0AKV9</accession>
<name>ATPG_MARMM</name>
<protein>
    <recommendedName>
        <fullName evidence="1">ATP synthase gamma chain</fullName>
    </recommendedName>
    <alternativeName>
        <fullName evidence="1">ATP synthase F1 sector gamma subunit</fullName>
    </alternativeName>
    <alternativeName>
        <fullName evidence="1">F-ATPase gamma subunit</fullName>
    </alternativeName>
</protein>
<organism>
    <name type="scientific">Maricaulis maris (strain MCS10)</name>
    <name type="common">Caulobacter maris</name>
    <dbReference type="NCBI Taxonomy" id="394221"/>
    <lineage>
        <taxon>Bacteria</taxon>
        <taxon>Pseudomonadati</taxon>
        <taxon>Pseudomonadota</taxon>
        <taxon>Alphaproteobacteria</taxon>
        <taxon>Maricaulales</taxon>
        <taxon>Maricaulaceae</taxon>
        <taxon>Maricaulis</taxon>
    </lineage>
</organism>
<dbReference type="EMBL" id="CP000449">
    <property type="protein sequence ID" value="ABI67084.1"/>
    <property type="molecule type" value="Genomic_DNA"/>
</dbReference>
<dbReference type="RefSeq" id="WP_011644728.1">
    <property type="nucleotide sequence ID" value="NC_008347.1"/>
</dbReference>
<dbReference type="SMR" id="Q0AKV9"/>
<dbReference type="STRING" id="394221.Mmar10_2803"/>
<dbReference type="KEGG" id="mmr:Mmar10_2803"/>
<dbReference type="eggNOG" id="COG0224">
    <property type="taxonomic scope" value="Bacteria"/>
</dbReference>
<dbReference type="HOGENOM" id="CLU_050669_0_1_5"/>
<dbReference type="OrthoDB" id="9812769at2"/>
<dbReference type="Proteomes" id="UP000001964">
    <property type="component" value="Chromosome"/>
</dbReference>
<dbReference type="GO" id="GO:0005886">
    <property type="term" value="C:plasma membrane"/>
    <property type="evidence" value="ECO:0007669"/>
    <property type="project" value="UniProtKB-SubCell"/>
</dbReference>
<dbReference type="GO" id="GO:0045259">
    <property type="term" value="C:proton-transporting ATP synthase complex"/>
    <property type="evidence" value="ECO:0007669"/>
    <property type="project" value="UniProtKB-KW"/>
</dbReference>
<dbReference type="GO" id="GO:0005524">
    <property type="term" value="F:ATP binding"/>
    <property type="evidence" value="ECO:0007669"/>
    <property type="project" value="UniProtKB-UniRule"/>
</dbReference>
<dbReference type="GO" id="GO:0046933">
    <property type="term" value="F:proton-transporting ATP synthase activity, rotational mechanism"/>
    <property type="evidence" value="ECO:0007669"/>
    <property type="project" value="UniProtKB-UniRule"/>
</dbReference>
<dbReference type="GO" id="GO:0042777">
    <property type="term" value="P:proton motive force-driven plasma membrane ATP synthesis"/>
    <property type="evidence" value="ECO:0007669"/>
    <property type="project" value="UniProtKB-UniRule"/>
</dbReference>
<dbReference type="CDD" id="cd12151">
    <property type="entry name" value="F1-ATPase_gamma"/>
    <property type="match status" value="1"/>
</dbReference>
<dbReference type="FunFam" id="1.10.287.80:FF:000001">
    <property type="entry name" value="ATP synthase gamma chain"/>
    <property type="match status" value="1"/>
</dbReference>
<dbReference type="FunFam" id="1.10.287.80:FF:000003">
    <property type="entry name" value="ATP synthase gamma chain, chloroplastic"/>
    <property type="match status" value="1"/>
</dbReference>
<dbReference type="Gene3D" id="3.40.1380.10">
    <property type="match status" value="1"/>
</dbReference>
<dbReference type="Gene3D" id="1.10.287.80">
    <property type="entry name" value="ATP synthase, gamma subunit, helix hairpin domain"/>
    <property type="match status" value="1"/>
</dbReference>
<dbReference type="HAMAP" id="MF_00815">
    <property type="entry name" value="ATP_synth_gamma_bact"/>
    <property type="match status" value="1"/>
</dbReference>
<dbReference type="InterPro" id="IPR035968">
    <property type="entry name" value="ATP_synth_F1_ATPase_gsu"/>
</dbReference>
<dbReference type="InterPro" id="IPR000131">
    <property type="entry name" value="ATP_synth_F1_gsu"/>
</dbReference>
<dbReference type="InterPro" id="IPR023632">
    <property type="entry name" value="ATP_synth_F1_gsu_CS"/>
</dbReference>
<dbReference type="NCBIfam" id="TIGR01146">
    <property type="entry name" value="ATPsyn_F1gamma"/>
    <property type="match status" value="1"/>
</dbReference>
<dbReference type="NCBIfam" id="NF004146">
    <property type="entry name" value="PRK05621.1-4"/>
    <property type="match status" value="1"/>
</dbReference>
<dbReference type="PANTHER" id="PTHR11693">
    <property type="entry name" value="ATP SYNTHASE GAMMA CHAIN"/>
    <property type="match status" value="1"/>
</dbReference>
<dbReference type="PANTHER" id="PTHR11693:SF22">
    <property type="entry name" value="ATP SYNTHASE SUBUNIT GAMMA, MITOCHONDRIAL"/>
    <property type="match status" value="1"/>
</dbReference>
<dbReference type="Pfam" id="PF00231">
    <property type="entry name" value="ATP-synt"/>
    <property type="match status" value="1"/>
</dbReference>
<dbReference type="PIRSF" id="PIRSF039089">
    <property type="entry name" value="ATP_synthase_gamma"/>
    <property type="match status" value="1"/>
</dbReference>
<dbReference type="PRINTS" id="PR00126">
    <property type="entry name" value="ATPASEGAMMA"/>
</dbReference>
<dbReference type="SUPFAM" id="SSF52943">
    <property type="entry name" value="ATP synthase (F1-ATPase), gamma subunit"/>
    <property type="match status" value="1"/>
</dbReference>
<dbReference type="PROSITE" id="PS00153">
    <property type="entry name" value="ATPASE_GAMMA"/>
    <property type="match status" value="1"/>
</dbReference>
<proteinExistence type="inferred from homology"/>
<comment type="function">
    <text evidence="1">Produces ATP from ADP in the presence of a proton gradient across the membrane. The gamma chain is believed to be important in regulating ATPase activity and the flow of protons through the CF(0) complex.</text>
</comment>
<comment type="subunit">
    <text evidence="1">F-type ATPases have 2 components, CF(1) - the catalytic core - and CF(0) - the membrane proton channel. CF(1) has five subunits: alpha(3), beta(3), gamma(1), delta(1), epsilon(1). CF(0) has three main subunits: a, b and c.</text>
</comment>
<comment type="subcellular location">
    <subcellularLocation>
        <location evidence="1">Cell inner membrane</location>
        <topology evidence="1">Peripheral membrane protein</topology>
    </subcellularLocation>
</comment>
<comment type="similarity">
    <text evidence="1">Belongs to the ATPase gamma chain family.</text>
</comment>
<evidence type="ECO:0000255" key="1">
    <source>
        <dbReference type="HAMAP-Rule" id="MF_00815"/>
    </source>
</evidence>
<feature type="chain" id="PRO_1000053250" description="ATP synthase gamma chain">
    <location>
        <begin position="1"/>
        <end position="295"/>
    </location>
</feature>
<sequence>MASLKDLKNRIGSVKSTQKITKAMQMVAAAKLRRAQEAAEAARPYAQRMAAVMANLSTAMSGTPGASPLLVGTGKSDAYLLVVMTADRGLCGGFNTNIVKKARERINALKAEGKDVKVICVGKKGADQLKRNFASLIVDKMELSGEKTITGATSVRIGDKIRHMFENGEFDVCELVSAEFVSVISQKPRAKVLIPAIDAIDEGVERPDLGGAVYDAEPDEETILNVLLPRYADTVILSALLENVAGEMGAKMAAMDNATRNAGELIDKLNLVYNRTRQAQITTELTEIISGAEAL</sequence>
<keyword id="KW-0066">ATP synthesis</keyword>
<keyword id="KW-0997">Cell inner membrane</keyword>
<keyword id="KW-1003">Cell membrane</keyword>
<keyword id="KW-0139">CF(1)</keyword>
<keyword id="KW-0375">Hydrogen ion transport</keyword>
<keyword id="KW-0406">Ion transport</keyword>
<keyword id="KW-0472">Membrane</keyword>
<keyword id="KW-1185">Reference proteome</keyword>
<keyword id="KW-0813">Transport</keyword>
<gene>
    <name evidence="1" type="primary">atpG</name>
    <name type="ordered locus">Mmar10_2803</name>
</gene>
<reference key="1">
    <citation type="submission" date="2006-08" db="EMBL/GenBank/DDBJ databases">
        <title>Complete sequence of Maricaulis maris MCS10.</title>
        <authorList>
            <consortium name="US DOE Joint Genome Institute"/>
            <person name="Copeland A."/>
            <person name="Lucas S."/>
            <person name="Lapidus A."/>
            <person name="Barry K."/>
            <person name="Detter J.C."/>
            <person name="Glavina del Rio T."/>
            <person name="Hammon N."/>
            <person name="Israni S."/>
            <person name="Dalin E."/>
            <person name="Tice H."/>
            <person name="Pitluck S."/>
            <person name="Saunders E."/>
            <person name="Brettin T."/>
            <person name="Bruce D."/>
            <person name="Han C."/>
            <person name="Tapia R."/>
            <person name="Gilna P."/>
            <person name="Schmutz J."/>
            <person name="Larimer F."/>
            <person name="Land M."/>
            <person name="Hauser L."/>
            <person name="Kyrpides N."/>
            <person name="Mikhailova N."/>
            <person name="Viollier P."/>
            <person name="Stephens C."/>
            <person name="Richardson P."/>
        </authorList>
    </citation>
    <scope>NUCLEOTIDE SEQUENCE [LARGE SCALE GENOMIC DNA]</scope>
    <source>
        <strain>MCS10</strain>
    </source>
</reference>